<dbReference type="EMBL" id="EU029692">
    <property type="protein sequence ID" value="ABU68492.1"/>
    <property type="molecule type" value="mRNA"/>
</dbReference>
<dbReference type="SMR" id="A7X3X3"/>
<dbReference type="GO" id="GO:0005576">
    <property type="term" value="C:extracellular region"/>
    <property type="evidence" value="ECO:0007669"/>
    <property type="project" value="UniProtKB-SubCell"/>
</dbReference>
<dbReference type="GO" id="GO:0030246">
    <property type="term" value="F:carbohydrate binding"/>
    <property type="evidence" value="ECO:0007669"/>
    <property type="project" value="UniProtKB-KW"/>
</dbReference>
<dbReference type="GO" id="GO:0046872">
    <property type="term" value="F:metal ion binding"/>
    <property type="evidence" value="ECO:0007669"/>
    <property type="project" value="UniProtKB-KW"/>
</dbReference>
<dbReference type="GO" id="GO:0090729">
    <property type="term" value="F:toxin activity"/>
    <property type="evidence" value="ECO:0007669"/>
    <property type="project" value="UniProtKB-KW"/>
</dbReference>
<dbReference type="FunFam" id="3.10.100.10:FF:000015">
    <property type="entry name" value="C-type lectin Cal"/>
    <property type="match status" value="1"/>
</dbReference>
<dbReference type="Gene3D" id="3.10.100.10">
    <property type="entry name" value="Mannose-Binding Protein A, subunit A"/>
    <property type="match status" value="1"/>
</dbReference>
<dbReference type="InterPro" id="IPR001304">
    <property type="entry name" value="C-type_lectin-like"/>
</dbReference>
<dbReference type="InterPro" id="IPR016186">
    <property type="entry name" value="C-type_lectin-like/link_sf"/>
</dbReference>
<dbReference type="InterPro" id="IPR050111">
    <property type="entry name" value="C-type_lectin/snaclec_domain"/>
</dbReference>
<dbReference type="InterPro" id="IPR018378">
    <property type="entry name" value="C-type_lectin_CS"/>
</dbReference>
<dbReference type="InterPro" id="IPR016187">
    <property type="entry name" value="CTDL_fold"/>
</dbReference>
<dbReference type="PANTHER" id="PTHR22803">
    <property type="entry name" value="MANNOSE, PHOSPHOLIPASE, LECTIN RECEPTOR RELATED"/>
    <property type="match status" value="1"/>
</dbReference>
<dbReference type="Pfam" id="PF00059">
    <property type="entry name" value="Lectin_C"/>
    <property type="match status" value="1"/>
</dbReference>
<dbReference type="PRINTS" id="PR01504">
    <property type="entry name" value="PNCREATITSAP"/>
</dbReference>
<dbReference type="SMART" id="SM00034">
    <property type="entry name" value="CLECT"/>
    <property type="match status" value="1"/>
</dbReference>
<dbReference type="SUPFAM" id="SSF56436">
    <property type="entry name" value="C-type lectin-like"/>
    <property type="match status" value="1"/>
</dbReference>
<dbReference type="PROSITE" id="PS00615">
    <property type="entry name" value="C_TYPE_LECTIN_1"/>
    <property type="match status" value="1"/>
</dbReference>
<dbReference type="PROSITE" id="PS50041">
    <property type="entry name" value="C_TYPE_LECTIN_2"/>
    <property type="match status" value="1"/>
</dbReference>
<reference key="1">
    <citation type="journal article" date="2008" name="Mol. Cell. Proteomics">
        <title>Evolution of an arsenal: structural and functional diversification of the venom system in the advanced snakes (Caenophidia).</title>
        <authorList>
            <person name="Fry B.G."/>
            <person name="Scheib H."/>
            <person name="van der Weerd L."/>
            <person name="Young B."/>
            <person name="McNaughtan J."/>
            <person name="Ramjan S.F.R."/>
            <person name="Vidal N."/>
            <person name="Poelmann R.E."/>
            <person name="Norman J.A."/>
        </authorList>
    </citation>
    <scope>NUCLEOTIDE SEQUENCE [MRNA]</scope>
    <source>
        <tissue>Venom gland</tissue>
    </source>
</reference>
<feature type="signal peptide" evidence="2">
    <location>
        <begin position="1"/>
        <end position="23"/>
    </location>
</feature>
<feature type="chain" id="PRO_0000356310" description="C-type lectin lectoxin-Enh4">
    <location>
        <begin position="24"/>
        <end position="158"/>
    </location>
</feature>
<feature type="domain" description="C-type lectin" evidence="3">
    <location>
        <begin position="33"/>
        <end position="155"/>
    </location>
</feature>
<feature type="short sequence motif" description="Mannose-binding">
    <location>
        <begin position="119"/>
        <end position="121"/>
    </location>
</feature>
<feature type="binding site" evidence="1">
    <location>
        <position position="127"/>
    </location>
    <ligand>
        <name>Ca(2+)</name>
        <dbReference type="ChEBI" id="CHEBI:29108"/>
    </ligand>
</feature>
<feature type="binding site" evidence="1">
    <location>
        <position position="142"/>
    </location>
    <ligand>
        <name>Ca(2+)</name>
        <dbReference type="ChEBI" id="CHEBI:29108"/>
    </ligand>
</feature>
<feature type="binding site" evidence="1">
    <location>
        <position position="143"/>
    </location>
    <ligand>
        <name>Ca(2+)</name>
        <dbReference type="ChEBI" id="CHEBI:29108"/>
    </ligand>
</feature>
<feature type="disulfide bond" evidence="3">
    <location>
        <begin position="26"/>
        <end position="37"/>
    </location>
</feature>
<feature type="disulfide bond" evidence="3">
    <location>
        <begin position="54"/>
        <end position="154"/>
    </location>
</feature>
<feature type="disulfide bond" evidence="3">
    <location>
        <begin position="129"/>
        <end position="146"/>
    </location>
</feature>
<comment type="function">
    <text evidence="1">Mannose-binding lectin which recognizes specific carbohydrate structures and agglutinates a variety of animal cells by binding to cell-surface glycoproteins and glycolipids. May be a calcium-dependent lectin (By similarity).</text>
</comment>
<comment type="subcellular location">
    <subcellularLocation>
        <location evidence="1">Secreted</location>
    </subcellularLocation>
</comment>
<comment type="tissue specificity">
    <text>Expressed by the venom gland.</text>
</comment>
<comment type="similarity">
    <text evidence="4">Belongs to the true venom lectin family.</text>
</comment>
<accession>A7X3X3</accession>
<keyword id="KW-0106">Calcium</keyword>
<keyword id="KW-1015">Disulfide bond</keyword>
<keyword id="KW-0348">Hemagglutinin</keyword>
<keyword id="KW-0430">Lectin</keyword>
<keyword id="KW-0479">Metal-binding</keyword>
<keyword id="KW-0964">Secreted</keyword>
<keyword id="KW-0732">Signal</keyword>
<keyword id="KW-0800">Toxin</keyword>
<proteinExistence type="evidence at transcript level"/>
<organism>
    <name type="scientific">Pseudoferania polylepis</name>
    <name type="common">Macleay's water snake</name>
    <name type="synonym">Enhydris polylepis</name>
    <dbReference type="NCBI Taxonomy" id="338839"/>
    <lineage>
        <taxon>Eukaryota</taxon>
        <taxon>Metazoa</taxon>
        <taxon>Chordata</taxon>
        <taxon>Craniata</taxon>
        <taxon>Vertebrata</taxon>
        <taxon>Euteleostomi</taxon>
        <taxon>Lepidosauria</taxon>
        <taxon>Squamata</taxon>
        <taxon>Bifurcata</taxon>
        <taxon>Unidentata</taxon>
        <taxon>Episquamata</taxon>
        <taxon>Toxicofera</taxon>
        <taxon>Serpentes</taxon>
        <taxon>Colubroidea</taxon>
        <taxon>Homalopsidae</taxon>
        <taxon>Pseudoferania</taxon>
    </lineage>
</organism>
<evidence type="ECO:0000250" key="1"/>
<evidence type="ECO:0000255" key="2"/>
<evidence type="ECO:0000255" key="3">
    <source>
        <dbReference type="PROSITE-ProRule" id="PRU00040"/>
    </source>
</evidence>
<evidence type="ECO:0000305" key="4"/>
<protein>
    <recommendedName>
        <fullName>C-type lectin lectoxin-Enh4</fullName>
        <shortName>CTL</shortName>
    </recommendedName>
</protein>
<sequence>MGQFTVVSLGLLAMFLSLSGAKGDNCPASWISRNGVCNKLFPDRKTWLEAEMYCRALKPGCHLASLHRDSDSTVLAWYISDHFKGAGHVWIGLRDTNRKRTWKWSDRTSTNYFSWNQGEPNNVQDDENCVHLWAPSGYLKWNDEPCASLHPFICQYKL</sequence>
<name>LECM4_PSEPL</name>